<evidence type="ECO:0000255" key="1">
    <source>
        <dbReference type="HAMAP-Rule" id="MF_01174"/>
    </source>
</evidence>
<evidence type="ECO:0000305" key="2"/>
<sequence length="485" mass="52000">MTQWIAGEWVEGLGEEFTSLSPYDNQVVWRGKGATAEQVEMAVKAARQAFVGWKKLSVAEREAMVLAFAEQVKENSEEIAQVIAKETGKPLWETRTEAAAMAGKIAISIRAYHERTGESQKEAAGNQIVLRHRPLGVMAVFGPYNFPGHLPNGHIVPALLAGNTVVFKPSEQTPWTGELAMKLWQAAGLPQGVINLVQGGKETGIALAESKGIDGLLFTGSANTGHLLHRQFAGQPGKMLALEMGGNNPMVITDHYGDLDATVYTIIQSAFISAGQRCTCARRLYIPLGEKGDALITRLVEATKKLRVDQPFAEPAPFMGPQISEAAANFILAAQANLQSLGGESLIEAKAGEAAFVTPGIIDVTNIAELPDEEYFGPLLQVVRYQTLEQAVELANDTRFGLSAGLVSTDDGEWQYFVDHIRAGIVNRNRQLTGASGDAPFGGPGASGNLRPSAYYAADYCAYPMASMEGEETLLPATLSPGVEL</sequence>
<name>ASTD_VIBVY</name>
<dbReference type="EC" id="1.2.1.71" evidence="1"/>
<dbReference type="EMBL" id="BA000037">
    <property type="protein sequence ID" value="BAC95816.1"/>
    <property type="status" value="ALT_INIT"/>
    <property type="molecule type" value="Genomic_DNA"/>
</dbReference>
<dbReference type="RefSeq" id="WP_039554875.1">
    <property type="nucleotide sequence ID" value="NC_005139.1"/>
</dbReference>
<dbReference type="SMR" id="Q7MH21"/>
<dbReference type="STRING" id="672.VV93_v1c27800"/>
<dbReference type="KEGG" id="vvy:VV3052"/>
<dbReference type="PATRIC" id="fig|196600.6.peg.3029"/>
<dbReference type="eggNOG" id="COG1012">
    <property type="taxonomic scope" value="Bacteria"/>
</dbReference>
<dbReference type="HOGENOM" id="CLU_005391_1_0_6"/>
<dbReference type="UniPathway" id="UPA00185">
    <property type="reaction ID" value="UER00282"/>
</dbReference>
<dbReference type="Proteomes" id="UP000002675">
    <property type="component" value="Chromosome I"/>
</dbReference>
<dbReference type="GO" id="GO:0043824">
    <property type="term" value="F:succinylglutamate-semialdehyde dehydrogenase activity"/>
    <property type="evidence" value="ECO:0007669"/>
    <property type="project" value="UniProtKB-EC"/>
</dbReference>
<dbReference type="GO" id="GO:0019544">
    <property type="term" value="P:arginine catabolic process to glutamate"/>
    <property type="evidence" value="ECO:0007669"/>
    <property type="project" value="UniProtKB-UniRule"/>
</dbReference>
<dbReference type="GO" id="GO:0019545">
    <property type="term" value="P:arginine catabolic process to succinate"/>
    <property type="evidence" value="ECO:0007669"/>
    <property type="project" value="UniProtKB-UniRule"/>
</dbReference>
<dbReference type="CDD" id="cd07095">
    <property type="entry name" value="ALDH_SGSD_AstD"/>
    <property type="match status" value="1"/>
</dbReference>
<dbReference type="FunFam" id="3.40.605.10:FF:000010">
    <property type="entry name" value="N-succinylglutamate 5-semialdehyde dehydrogenase"/>
    <property type="match status" value="1"/>
</dbReference>
<dbReference type="Gene3D" id="3.40.605.10">
    <property type="entry name" value="Aldehyde Dehydrogenase, Chain A, domain 1"/>
    <property type="match status" value="1"/>
</dbReference>
<dbReference type="Gene3D" id="3.40.309.10">
    <property type="entry name" value="Aldehyde Dehydrogenase, Chain A, domain 2"/>
    <property type="match status" value="1"/>
</dbReference>
<dbReference type="HAMAP" id="MF_01174">
    <property type="entry name" value="Aldedh_AstD"/>
    <property type="match status" value="1"/>
</dbReference>
<dbReference type="InterPro" id="IPR016161">
    <property type="entry name" value="Ald_DH/histidinol_DH"/>
</dbReference>
<dbReference type="InterPro" id="IPR016163">
    <property type="entry name" value="Ald_DH_C"/>
</dbReference>
<dbReference type="InterPro" id="IPR016160">
    <property type="entry name" value="Ald_DH_CS_CYS"/>
</dbReference>
<dbReference type="InterPro" id="IPR029510">
    <property type="entry name" value="Ald_DH_CS_GLU"/>
</dbReference>
<dbReference type="InterPro" id="IPR016162">
    <property type="entry name" value="Ald_DH_N"/>
</dbReference>
<dbReference type="InterPro" id="IPR015590">
    <property type="entry name" value="Aldehyde_DH_dom"/>
</dbReference>
<dbReference type="InterPro" id="IPR017649">
    <property type="entry name" value="SuccinylGlu_semiald_DH_AstD"/>
</dbReference>
<dbReference type="NCBIfam" id="TIGR03240">
    <property type="entry name" value="arg_catab_astD"/>
    <property type="match status" value="1"/>
</dbReference>
<dbReference type="NCBIfam" id="NF006992">
    <property type="entry name" value="PRK09457.1"/>
    <property type="match status" value="1"/>
</dbReference>
<dbReference type="PANTHER" id="PTHR11699">
    <property type="entry name" value="ALDEHYDE DEHYDROGENASE-RELATED"/>
    <property type="match status" value="1"/>
</dbReference>
<dbReference type="Pfam" id="PF00171">
    <property type="entry name" value="Aldedh"/>
    <property type="match status" value="1"/>
</dbReference>
<dbReference type="SUPFAM" id="SSF53720">
    <property type="entry name" value="ALDH-like"/>
    <property type="match status" value="1"/>
</dbReference>
<dbReference type="PROSITE" id="PS00070">
    <property type="entry name" value="ALDEHYDE_DEHYDR_CYS"/>
    <property type="match status" value="1"/>
</dbReference>
<dbReference type="PROSITE" id="PS00687">
    <property type="entry name" value="ALDEHYDE_DEHYDR_GLU"/>
    <property type="match status" value="1"/>
</dbReference>
<organism>
    <name type="scientific">Vibrio vulnificus (strain YJ016)</name>
    <dbReference type="NCBI Taxonomy" id="196600"/>
    <lineage>
        <taxon>Bacteria</taxon>
        <taxon>Pseudomonadati</taxon>
        <taxon>Pseudomonadota</taxon>
        <taxon>Gammaproteobacteria</taxon>
        <taxon>Vibrionales</taxon>
        <taxon>Vibrionaceae</taxon>
        <taxon>Vibrio</taxon>
    </lineage>
</organism>
<keyword id="KW-0056">Arginine metabolism</keyword>
<keyword id="KW-0520">NAD</keyword>
<keyword id="KW-0560">Oxidoreductase</keyword>
<reference key="1">
    <citation type="journal article" date="2003" name="Genome Res.">
        <title>Comparative genome analysis of Vibrio vulnificus, a marine pathogen.</title>
        <authorList>
            <person name="Chen C.-Y."/>
            <person name="Wu K.-M."/>
            <person name="Chang Y.-C."/>
            <person name="Chang C.-H."/>
            <person name="Tsai H.-C."/>
            <person name="Liao T.-L."/>
            <person name="Liu Y.-M."/>
            <person name="Chen H.-J."/>
            <person name="Shen A.B.-T."/>
            <person name="Li J.-C."/>
            <person name="Su T.-L."/>
            <person name="Shao C.-P."/>
            <person name="Lee C.-T."/>
            <person name="Hor L.-I."/>
            <person name="Tsai S.-F."/>
        </authorList>
    </citation>
    <scope>NUCLEOTIDE SEQUENCE [LARGE SCALE GENOMIC DNA]</scope>
    <source>
        <strain>YJ016</strain>
    </source>
</reference>
<protein>
    <recommendedName>
        <fullName evidence="1">N-succinylglutamate 5-semialdehyde dehydrogenase</fullName>
        <ecNumber evidence="1">1.2.1.71</ecNumber>
    </recommendedName>
    <alternativeName>
        <fullName evidence="1">Succinylglutamic semialdehyde dehydrogenase</fullName>
        <shortName evidence="1">SGSD</shortName>
    </alternativeName>
</protein>
<comment type="function">
    <text evidence="1">Catalyzes the NAD-dependent reduction of succinylglutamate semialdehyde into succinylglutamate.</text>
</comment>
<comment type="catalytic activity">
    <reaction evidence="1">
        <text>N-succinyl-L-glutamate 5-semialdehyde + NAD(+) + H2O = N-succinyl-L-glutamate + NADH + 2 H(+)</text>
        <dbReference type="Rhea" id="RHEA:10812"/>
        <dbReference type="ChEBI" id="CHEBI:15377"/>
        <dbReference type="ChEBI" id="CHEBI:15378"/>
        <dbReference type="ChEBI" id="CHEBI:57540"/>
        <dbReference type="ChEBI" id="CHEBI:57945"/>
        <dbReference type="ChEBI" id="CHEBI:58520"/>
        <dbReference type="ChEBI" id="CHEBI:58763"/>
        <dbReference type="EC" id="1.2.1.71"/>
    </reaction>
</comment>
<comment type="pathway">
    <text evidence="1">Amino-acid degradation; L-arginine degradation via AST pathway; L-glutamate and succinate from L-arginine: step 4/5.</text>
</comment>
<comment type="similarity">
    <text evidence="1">Belongs to the aldehyde dehydrogenase family. AstD subfamily.</text>
</comment>
<comment type="sequence caution" evidence="2">
    <conflict type="erroneous initiation">
        <sequence resource="EMBL-CDS" id="BAC95816"/>
    </conflict>
</comment>
<feature type="chain" id="PRO_0000262435" description="N-succinylglutamate 5-semialdehyde dehydrogenase">
    <location>
        <begin position="1"/>
        <end position="485"/>
    </location>
</feature>
<feature type="active site" evidence="1">
    <location>
        <position position="243"/>
    </location>
</feature>
<feature type="active site" evidence="1">
    <location>
        <position position="278"/>
    </location>
</feature>
<feature type="binding site" evidence="1">
    <location>
        <begin position="220"/>
        <end position="225"/>
    </location>
    <ligand>
        <name>NAD(+)</name>
        <dbReference type="ChEBI" id="CHEBI:57540"/>
    </ligand>
</feature>
<accession>Q7MH21</accession>
<gene>
    <name evidence="1" type="primary">astD</name>
    <name type="ordered locus">VV3052</name>
</gene>
<proteinExistence type="inferred from homology"/>